<accession>A9HWU6</accession>
<name>RL33_BORPD</name>
<dbReference type="EMBL" id="AM902716">
    <property type="protein sequence ID" value="CAP43656.1"/>
    <property type="molecule type" value="Genomic_DNA"/>
</dbReference>
<dbReference type="SMR" id="A9HWU6"/>
<dbReference type="STRING" id="94624.Bpet3314"/>
<dbReference type="KEGG" id="bpt:Bpet3314"/>
<dbReference type="eggNOG" id="COG0267">
    <property type="taxonomic scope" value="Bacteria"/>
</dbReference>
<dbReference type="Proteomes" id="UP000001225">
    <property type="component" value="Chromosome"/>
</dbReference>
<dbReference type="GO" id="GO:0022625">
    <property type="term" value="C:cytosolic large ribosomal subunit"/>
    <property type="evidence" value="ECO:0007669"/>
    <property type="project" value="TreeGrafter"/>
</dbReference>
<dbReference type="GO" id="GO:0003735">
    <property type="term" value="F:structural constituent of ribosome"/>
    <property type="evidence" value="ECO:0007669"/>
    <property type="project" value="InterPro"/>
</dbReference>
<dbReference type="GO" id="GO:0006412">
    <property type="term" value="P:translation"/>
    <property type="evidence" value="ECO:0007669"/>
    <property type="project" value="UniProtKB-UniRule"/>
</dbReference>
<dbReference type="FunFam" id="2.20.28.120:FF:000001">
    <property type="entry name" value="50S ribosomal protein L33"/>
    <property type="match status" value="1"/>
</dbReference>
<dbReference type="Gene3D" id="2.20.28.120">
    <property type="entry name" value="Ribosomal protein L33"/>
    <property type="match status" value="1"/>
</dbReference>
<dbReference type="HAMAP" id="MF_00294">
    <property type="entry name" value="Ribosomal_bL33"/>
    <property type="match status" value="1"/>
</dbReference>
<dbReference type="InterPro" id="IPR001705">
    <property type="entry name" value="Ribosomal_bL33"/>
</dbReference>
<dbReference type="InterPro" id="IPR038584">
    <property type="entry name" value="Ribosomal_bL33_sf"/>
</dbReference>
<dbReference type="InterPro" id="IPR011332">
    <property type="entry name" value="Ribosomal_zn-bd"/>
</dbReference>
<dbReference type="NCBIfam" id="NF001860">
    <property type="entry name" value="PRK00595.1"/>
    <property type="match status" value="1"/>
</dbReference>
<dbReference type="NCBIfam" id="TIGR01023">
    <property type="entry name" value="rpmG_bact"/>
    <property type="match status" value="1"/>
</dbReference>
<dbReference type="PANTHER" id="PTHR15238">
    <property type="entry name" value="54S RIBOSOMAL PROTEIN L39, MITOCHONDRIAL"/>
    <property type="match status" value="1"/>
</dbReference>
<dbReference type="PANTHER" id="PTHR15238:SF1">
    <property type="entry name" value="LARGE RIBOSOMAL SUBUNIT PROTEIN BL33M"/>
    <property type="match status" value="1"/>
</dbReference>
<dbReference type="Pfam" id="PF00471">
    <property type="entry name" value="Ribosomal_L33"/>
    <property type="match status" value="1"/>
</dbReference>
<dbReference type="SUPFAM" id="SSF57829">
    <property type="entry name" value="Zn-binding ribosomal proteins"/>
    <property type="match status" value="1"/>
</dbReference>
<reference key="1">
    <citation type="journal article" date="2008" name="BMC Genomics">
        <title>The missing link: Bordetella petrii is endowed with both the metabolic versatility of environmental bacteria and virulence traits of pathogenic Bordetellae.</title>
        <authorList>
            <person name="Gross R."/>
            <person name="Guzman C.A."/>
            <person name="Sebaihia M."/>
            <person name="Martin dos Santos V.A.P."/>
            <person name="Pieper D.H."/>
            <person name="Koebnik R."/>
            <person name="Lechner M."/>
            <person name="Bartels D."/>
            <person name="Buhrmester J."/>
            <person name="Choudhuri J.V."/>
            <person name="Ebensen T."/>
            <person name="Gaigalat L."/>
            <person name="Herrmann S."/>
            <person name="Khachane A.N."/>
            <person name="Larisch C."/>
            <person name="Link S."/>
            <person name="Linke B."/>
            <person name="Meyer F."/>
            <person name="Mormann S."/>
            <person name="Nakunst D."/>
            <person name="Rueckert C."/>
            <person name="Schneiker-Bekel S."/>
            <person name="Schulze K."/>
            <person name="Voerholter F.-J."/>
            <person name="Yevsa T."/>
            <person name="Engle J.T."/>
            <person name="Goldman W.E."/>
            <person name="Puehler A."/>
            <person name="Goebel U.B."/>
            <person name="Goesmann A."/>
            <person name="Bloecker H."/>
            <person name="Kaiser O."/>
            <person name="Martinez-Arias R."/>
        </authorList>
    </citation>
    <scope>NUCLEOTIDE SEQUENCE [LARGE SCALE GENOMIC DNA]</scope>
    <source>
        <strain>ATCC BAA-461 / DSM 12804 / CCUG 43448</strain>
    </source>
</reference>
<sequence>MAKGIREKIKLESTAGTGHFYTTTKNKRNMPEKMLIKKFDPVARKHVDYKETKLK</sequence>
<keyword id="KW-0687">Ribonucleoprotein</keyword>
<keyword id="KW-0689">Ribosomal protein</keyword>
<comment type="similarity">
    <text evidence="1">Belongs to the bacterial ribosomal protein bL33 family.</text>
</comment>
<proteinExistence type="inferred from homology"/>
<evidence type="ECO:0000255" key="1">
    <source>
        <dbReference type="HAMAP-Rule" id="MF_00294"/>
    </source>
</evidence>
<evidence type="ECO:0000305" key="2"/>
<organism>
    <name type="scientific">Bordetella petrii (strain ATCC BAA-461 / DSM 12804 / CCUG 43448)</name>
    <dbReference type="NCBI Taxonomy" id="340100"/>
    <lineage>
        <taxon>Bacteria</taxon>
        <taxon>Pseudomonadati</taxon>
        <taxon>Pseudomonadota</taxon>
        <taxon>Betaproteobacteria</taxon>
        <taxon>Burkholderiales</taxon>
        <taxon>Alcaligenaceae</taxon>
        <taxon>Bordetella</taxon>
    </lineage>
</organism>
<feature type="chain" id="PRO_1000115099" description="Large ribosomal subunit protein bL33">
    <location>
        <begin position="1"/>
        <end position="55"/>
    </location>
</feature>
<protein>
    <recommendedName>
        <fullName evidence="1">Large ribosomal subunit protein bL33</fullName>
    </recommendedName>
    <alternativeName>
        <fullName evidence="2">50S ribosomal protein L33</fullName>
    </alternativeName>
</protein>
<gene>
    <name evidence="1" type="primary">rpmG</name>
    <name type="ordered locus">Bpet3314</name>
</gene>